<keyword id="KW-0963">Cytoplasm</keyword>
<keyword id="KW-0489">Methyltransferase</keyword>
<keyword id="KW-1185">Reference proteome</keyword>
<keyword id="KW-0698">rRNA processing</keyword>
<keyword id="KW-0949">S-adenosyl-L-methionine</keyword>
<keyword id="KW-0808">Transferase</keyword>
<reference key="1">
    <citation type="journal article" date="2005" name="Nat. Biotechnol.">
        <title>The complete genome sequence of the meat-borne lactic acid bacterium Lactobacillus sakei 23K.</title>
        <authorList>
            <person name="Chaillou S."/>
            <person name="Champomier-Verges M.-C."/>
            <person name="Cornet M."/>
            <person name="Crutz-Le Coq A.-M."/>
            <person name="Dudez A.-M."/>
            <person name="Martin V."/>
            <person name="Beaufils S."/>
            <person name="Darbon-Rongere E."/>
            <person name="Bossy R."/>
            <person name="Loux V."/>
            <person name="Zagorec M."/>
        </authorList>
    </citation>
    <scope>NUCLEOTIDE SEQUENCE [LARGE SCALE GENOMIC DNA]</scope>
    <source>
        <strain>23K</strain>
    </source>
</reference>
<accession>Q38ZJ4</accession>
<feature type="chain" id="PRO_0000260564" description="Ribosomal RNA large subunit methyltransferase H">
    <location>
        <begin position="1"/>
        <end position="159"/>
    </location>
</feature>
<feature type="binding site" evidence="1">
    <location>
        <position position="76"/>
    </location>
    <ligand>
        <name>S-adenosyl-L-methionine</name>
        <dbReference type="ChEBI" id="CHEBI:59789"/>
    </ligand>
</feature>
<feature type="binding site" evidence="1">
    <location>
        <position position="108"/>
    </location>
    <ligand>
        <name>S-adenosyl-L-methionine</name>
        <dbReference type="ChEBI" id="CHEBI:59789"/>
    </ligand>
</feature>
<feature type="binding site" evidence="1">
    <location>
        <begin position="127"/>
        <end position="132"/>
    </location>
    <ligand>
        <name>S-adenosyl-L-methionine</name>
        <dbReference type="ChEBI" id="CHEBI:59789"/>
    </ligand>
</feature>
<name>RLMH_LATSS</name>
<evidence type="ECO:0000255" key="1">
    <source>
        <dbReference type="HAMAP-Rule" id="MF_00658"/>
    </source>
</evidence>
<gene>
    <name evidence="1" type="primary">rlmH</name>
    <name type="ordered locus">LCA_0084</name>
</gene>
<protein>
    <recommendedName>
        <fullName evidence="1">Ribosomal RNA large subunit methyltransferase H</fullName>
        <ecNumber evidence="1">2.1.1.177</ecNumber>
    </recommendedName>
    <alternativeName>
        <fullName evidence="1">23S rRNA (pseudouridine1915-N3)-methyltransferase</fullName>
    </alternativeName>
    <alternativeName>
        <fullName evidence="1">23S rRNA m3Psi1915 methyltransferase</fullName>
    </alternativeName>
    <alternativeName>
        <fullName evidence="1">rRNA (pseudouridine-N3-)-methyltransferase RlmH</fullName>
    </alternativeName>
</protein>
<sequence length="159" mass="17818">MNIKIITVGKLKEKYLKAGIAEYAKRLSKFCKFEIIEVSDEKAPESLSEAEMTTVKDKEGERILAKVKDKEHVIVLAIHGKQRASEEFAKEIQDLATYGTSDITFIIGGSLGTSDAVNKRANDALSFGKLTLPHQLMRLVLTEQIYRAFMINQGSPYHK</sequence>
<comment type="function">
    <text evidence="1">Specifically methylates the pseudouridine at position 1915 (m3Psi1915) in 23S rRNA.</text>
</comment>
<comment type="catalytic activity">
    <reaction evidence="1">
        <text>pseudouridine(1915) in 23S rRNA + S-adenosyl-L-methionine = N(3)-methylpseudouridine(1915) in 23S rRNA + S-adenosyl-L-homocysteine + H(+)</text>
        <dbReference type="Rhea" id="RHEA:42752"/>
        <dbReference type="Rhea" id="RHEA-COMP:10221"/>
        <dbReference type="Rhea" id="RHEA-COMP:10222"/>
        <dbReference type="ChEBI" id="CHEBI:15378"/>
        <dbReference type="ChEBI" id="CHEBI:57856"/>
        <dbReference type="ChEBI" id="CHEBI:59789"/>
        <dbReference type="ChEBI" id="CHEBI:65314"/>
        <dbReference type="ChEBI" id="CHEBI:74486"/>
        <dbReference type="EC" id="2.1.1.177"/>
    </reaction>
</comment>
<comment type="subunit">
    <text evidence="1">Homodimer.</text>
</comment>
<comment type="subcellular location">
    <subcellularLocation>
        <location evidence="1">Cytoplasm</location>
    </subcellularLocation>
</comment>
<comment type="similarity">
    <text evidence="1">Belongs to the RNA methyltransferase RlmH family.</text>
</comment>
<proteinExistence type="inferred from homology"/>
<organism>
    <name type="scientific">Latilactobacillus sakei subsp. sakei (strain 23K)</name>
    <name type="common">Lactobacillus sakei subsp. sakei</name>
    <dbReference type="NCBI Taxonomy" id="314315"/>
    <lineage>
        <taxon>Bacteria</taxon>
        <taxon>Bacillati</taxon>
        <taxon>Bacillota</taxon>
        <taxon>Bacilli</taxon>
        <taxon>Lactobacillales</taxon>
        <taxon>Lactobacillaceae</taxon>
        <taxon>Latilactobacillus</taxon>
    </lineage>
</organism>
<dbReference type="EC" id="2.1.1.177" evidence="1"/>
<dbReference type="EMBL" id="CR936503">
    <property type="protein sequence ID" value="CAI54383.1"/>
    <property type="molecule type" value="Genomic_DNA"/>
</dbReference>
<dbReference type="RefSeq" id="WP_011373797.1">
    <property type="nucleotide sequence ID" value="NC_007576.1"/>
</dbReference>
<dbReference type="SMR" id="Q38ZJ4"/>
<dbReference type="STRING" id="314315.LCA_0084"/>
<dbReference type="GeneID" id="57132895"/>
<dbReference type="KEGG" id="lsa:LCA_0084"/>
<dbReference type="eggNOG" id="COG1576">
    <property type="taxonomic scope" value="Bacteria"/>
</dbReference>
<dbReference type="HOGENOM" id="CLU_100552_0_0_9"/>
<dbReference type="OrthoDB" id="9806643at2"/>
<dbReference type="Proteomes" id="UP000002707">
    <property type="component" value="Chromosome"/>
</dbReference>
<dbReference type="GO" id="GO:0005737">
    <property type="term" value="C:cytoplasm"/>
    <property type="evidence" value="ECO:0007669"/>
    <property type="project" value="UniProtKB-SubCell"/>
</dbReference>
<dbReference type="GO" id="GO:0070038">
    <property type="term" value="F:rRNA (pseudouridine-N3-)-methyltransferase activity"/>
    <property type="evidence" value="ECO:0007669"/>
    <property type="project" value="UniProtKB-UniRule"/>
</dbReference>
<dbReference type="CDD" id="cd18081">
    <property type="entry name" value="RlmH-like"/>
    <property type="match status" value="1"/>
</dbReference>
<dbReference type="Gene3D" id="3.40.1280.10">
    <property type="match status" value="1"/>
</dbReference>
<dbReference type="HAMAP" id="MF_00658">
    <property type="entry name" value="23SrRNA_methyltr_H"/>
    <property type="match status" value="1"/>
</dbReference>
<dbReference type="InterPro" id="IPR029028">
    <property type="entry name" value="Alpha/beta_knot_MTases"/>
</dbReference>
<dbReference type="InterPro" id="IPR003742">
    <property type="entry name" value="RlmH-like"/>
</dbReference>
<dbReference type="InterPro" id="IPR029026">
    <property type="entry name" value="tRNA_m1G_MTases_N"/>
</dbReference>
<dbReference type="NCBIfam" id="NF000985">
    <property type="entry name" value="PRK00103.1-3"/>
    <property type="match status" value="1"/>
</dbReference>
<dbReference type="NCBIfam" id="TIGR00246">
    <property type="entry name" value="tRNA_RlmH_YbeA"/>
    <property type="match status" value="1"/>
</dbReference>
<dbReference type="PANTHER" id="PTHR33603">
    <property type="entry name" value="METHYLTRANSFERASE"/>
    <property type="match status" value="1"/>
</dbReference>
<dbReference type="PANTHER" id="PTHR33603:SF1">
    <property type="entry name" value="RIBOSOMAL RNA LARGE SUBUNIT METHYLTRANSFERASE H"/>
    <property type="match status" value="1"/>
</dbReference>
<dbReference type="Pfam" id="PF02590">
    <property type="entry name" value="SPOUT_MTase"/>
    <property type="match status" value="1"/>
</dbReference>
<dbReference type="PIRSF" id="PIRSF004505">
    <property type="entry name" value="MT_bac"/>
    <property type="match status" value="1"/>
</dbReference>
<dbReference type="SUPFAM" id="SSF75217">
    <property type="entry name" value="alpha/beta knot"/>
    <property type="match status" value="1"/>
</dbReference>